<proteinExistence type="inferred from homology"/>
<protein>
    <recommendedName>
        <fullName evidence="1">ATP synthase subunit b</fullName>
    </recommendedName>
    <alternativeName>
        <fullName evidence="1">ATP synthase F(0) sector subunit b</fullName>
    </alternativeName>
    <alternativeName>
        <fullName evidence="1">ATPase subunit I</fullName>
    </alternativeName>
    <alternativeName>
        <fullName evidence="1">F-type ATPase subunit b</fullName>
        <shortName evidence="1">F-ATPase subunit b</shortName>
    </alternativeName>
</protein>
<dbReference type="EMBL" id="CP001056">
    <property type="protein sequence ID" value="ACD23772.1"/>
    <property type="molecule type" value="Genomic_DNA"/>
</dbReference>
<dbReference type="SMR" id="B2TJZ6"/>
<dbReference type="KEGG" id="cbk:CLL_A0494"/>
<dbReference type="PATRIC" id="fig|935198.13.peg.449"/>
<dbReference type="HOGENOM" id="CLU_079215_4_0_9"/>
<dbReference type="Proteomes" id="UP000001195">
    <property type="component" value="Chromosome"/>
</dbReference>
<dbReference type="GO" id="GO:0005886">
    <property type="term" value="C:plasma membrane"/>
    <property type="evidence" value="ECO:0007669"/>
    <property type="project" value="UniProtKB-SubCell"/>
</dbReference>
<dbReference type="GO" id="GO:0045259">
    <property type="term" value="C:proton-transporting ATP synthase complex"/>
    <property type="evidence" value="ECO:0007669"/>
    <property type="project" value="UniProtKB-KW"/>
</dbReference>
<dbReference type="GO" id="GO:0046933">
    <property type="term" value="F:proton-transporting ATP synthase activity, rotational mechanism"/>
    <property type="evidence" value="ECO:0007669"/>
    <property type="project" value="UniProtKB-UniRule"/>
</dbReference>
<dbReference type="GO" id="GO:0046961">
    <property type="term" value="F:proton-transporting ATPase activity, rotational mechanism"/>
    <property type="evidence" value="ECO:0007669"/>
    <property type="project" value="TreeGrafter"/>
</dbReference>
<dbReference type="CDD" id="cd06503">
    <property type="entry name" value="ATP-synt_Fo_b"/>
    <property type="match status" value="1"/>
</dbReference>
<dbReference type="Gene3D" id="1.20.5.620">
    <property type="entry name" value="F1F0 ATP synthase subunit B, membrane domain"/>
    <property type="match status" value="1"/>
</dbReference>
<dbReference type="HAMAP" id="MF_01398">
    <property type="entry name" value="ATP_synth_b_bprime"/>
    <property type="match status" value="1"/>
</dbReference>
<dbReference type="InterPro" id="IPR028987">
    <property type="entry name" value="ATP_synth_B-like_membr_sf"/>
</dbReference>
<dbReference type="InterPro" id="IPR002146">
    <property type="entry name" value="ATP_synth_b/b'su_bac/chlpt"/>
</dbReference>
<dbReference type="InterPro" id="IPR005864">
    <property type="entry name" value="ATP_synth_F0_bsu_bac"/>
</dbReference>
<dbReference type="InterPro" id="IPR050059">
    <property type="entry name" value="ATP_synthase_B_chain"/>
</dbReference>
<dbReference type="NCBIfam" id="TIGR01144">
    <property type="entry name" value="ATP_synt_b"/>
    <property type="match status" value="1"/>
</dbReference>
<dbReference type="NCBIfam" id="NF009992">
    <property type="entry name" value="PRK13461.1"/>
    <property type="match status" value="1"/>
</dbReference>
<dbReference type="PANTHER" id="PTHR33445:SF1">
    <property type="entry name" value="ATP SYNTHASE SUBUNIT B"/>
    <property type="match status" value="1"/>
</dbReference>
<dbReference type="PANTHER" id="PTHR33445">
    <property type="entry name" value="ATP SYNTHASE SUBUNIT B', CHLOROPLASTIC"/>
    <property type="match status" value="1"/>
</dbReference>
<dbReference type="Pfam" id="PF00430">
    <property type="entry name" value="ATP-synt_B"/>
    <property type="match status" value="1"/>
</dbReference>
<dbReference type="SUPFAM" id="SSF81573">
    <property type="entry name" value="F1F0 ATP synthase subunit B, membrane domain"/>
    <property type="match status" value="1"/>
</dbReference>
<name>ATPF_CLOBB</name>
<accession>B2TJZ6</accession>
<reference key="1">
    <citation type="submission" date="2008-04" db="EMBL/GenBank/DDBJ databases">
        <title>Complete sequence of Clostridium botulinum strain Eklund.</title>
        <authorList>
            <person name="Brinkac L.M."/>
            <person name="Brown J.L."/>
            <person name="Bruce D."/>
            <person name="Detter C."/>
            <person name="Munk C."/>
            <person name="Smith L.A."/>
            <person name="Smith T.J."/>
            <person name="Sutton G."/>
            <person name="Brettin T.S."/>
        </authorList>
    </citation>
    <scope>NUCLEOTIDE SEQUENCE [LARGE SCALE GENOMIC DNA]</scope>
    <source>
        <strain>Eklund 17B / Type B</strain>
    </source>
</reference>
<gene>
    <name evidence="1" type="primary">atpF</name>
    <name type="ordered locus">CLL_A0494</name>
</gene>
<keyword id="KW-0066">ATP synthesis</keyword>
<keyword id="KW-1003">Cell membrane</keyword>
<keyword id="KW-0138">CF(0)</keyword>
<keyword id="KW-0375">Hydrogen ion transport</keyword>
<keyword id="KW-0406">Ion transport</keyword>
<keyword id="KW-0472">Membrane</keyword>
<keyword id="KW-0812">Transmembrane</keyword>
<keyword id="KW-1133">Transmembrane helix</keyword>
<keyword id="KW-0813">Transport</keyword>
<comment type="function">
    <text evidence="1">F(1)F(0) ATP synthase produces ATP from ADP in the presence of a proton or sodium gradient. F-type ATPases consist of two structural domains, F(1) containing the extramembraneous catalytic core and F(0) containing the membrane proton channel, linked together by a central stalk and a peripheral stalk. During catalysis, ATP synthesis in the catalytic domain of F(1) is coupled via a rotary mechanism of the central stalk subunits to proton translocation.</text>
</comment>
<comment type="function">
    <text evidence="1">Component of the F(0) channel, it forms part of the peripheral stalk, linking F(1) to F(0).</text>
</comment>
<comment type="subunit">
    <text evidence="1">F-type ATPases have 2 components, F(1) - the catalytic core - and F(0) - the membrane proton channel. F(1) has five subunits: alpha(3), beta(3), gamma(1), delta(1), epsilon(1). F(0) has three main subunits: a(1), b(2) and c(10-14). The alpha and beta chains form an alternating ring which encloses part of the gamma chain. F(1) is attached to F(0) by a central stalk formed by the gamma and epsilon chains, while a peripheral stalk is formed by the delta and b chains.</text>
</comment>
<comment type="subcellular location">
    <subcellularLocation>
        <location evidence="1">Cell membrane</location>
        <topology evidence="1">Single-pass membrane protein</topology>
    </subcellularLocation>
</comment>
<comment type="similarity">
    <text evidence="1">Belongs to the ATPase B chain family.</text>
</comment>
<sequence length="159" mass="18672">METNYSVIFMTIINFCILVAILKHFFWDKIKGIINERQDFVDEQLLKVDEDSEKARMYLLENQRILQTAKEEGKKITESQKEKANKVYDEIVEDANEEAKSLLERAKTDIQREKEKAEYEIKKQAVDLAIELSIKALEENIDESKHRELISNFITKVGM</sequence>
<organism>
    <name type="scientific">Clostridium botulinum (strain Eklund 17B / Type B)</name>
    <dbReference type="NCBI Taxonomy" id="935198"/>
    <lineage>
        <taxon>Bacteria</taxon>
        <taxon>Bacillati</taxon>
        <taxon>Bacillota</taxon>
        <taxon>Clostridia</taxon>
        <taxon>Eubacteriales</taxon>
        <taxon>Clostridiaceae</taxon>
        <taxon>Clostridium</taxon>
    </lineage>
</organism>
<feature type="chain" id="PRO_0000368422" description="ATP synthase subunit b">
    <location>
        <begin position="1"/>
        <end position="159"/>
    </location>
</feature>
<feature type="transmembrane region" description="Helical" evidence="1">
    <location>
        <begin position="7"/>
        <end position="27"/>
    </location>
</feature>
<evidence type="ECO:0000255" key="1">
    <source>
        <dbReference type="HAMAP-Rule" id="MF_01398"/>
    </source>
</evidence>